<comment type="function">
    <text evidence="1">Plays a role in cell envelope biogenesis, maintenance of cell envelope integrity and membrane homeostasis.</text>
</comment>
<comment type="subcellular location">
    <subcellularLocation>
        <location evidence="1">Cell inner membrane</location>
        <topology evidence="1">Multi-pass membrane protein</topology>
    </subcellularLocation>
</comment>
<comment type="similarity">
    <text evidence="1">Belongs to the YciB family.</text>
</comment>
<evidence type="ECO:0000255" key="1">
    <source>
        <dbReference type="HAMAP-Rule" id="MF_00189"/>
    </source>
</evidence>
<protein>
    <recommendedName>
        <fullName evidence="1">Inner membrane-spanning protein YciB</fullName>
    </recommendedName>
</protein>
<accession>Q1CJ37</accession>
<accession>C4GSV6</accession>
<feature type="chain" id="PRO_1000021076" description="Inner membrane-spanning protein YciB">
    <location>
        <begin position="1"/>
        <end position="180"/>
    </location>
</feature>
<feature type="transmembrane region" description="Helical" evidence="1">
    <location>
        <begin position="22"/>
        <end position="42"/>
    </location>
</feature>
<feature type="transmembrane region" description="Helical" evidence="1">
    <location>
        <begin position="50"/>
        <end position="70"/>
    </location>
</feature>
<feature type="transmembrane region" description="Helical" evidence="1">
    <location>
        <begin position="72"/>
        <end position="92"/>
    </location>
</feature>
<feature type="transmembrane region" description="Helical" evidence="1">
    <location>
        <begin position="121"/>
        <end position="141"/>
    </location>
</feature>
<feature type="transmembrane region" description="Helical" evidence="1">
    <location>
        <begin position="149"/>
        <end position="169"/>
    </location>
</feature>
<reference key="1">
    <citation type="journal article" date="2006" name="J. Bacteriol.">
        <title>Complete genome sequence of Yersinia pestis strains Antiqua and Nepal516: evidence of gene reduction in an emerging pathogen.</title>
        <authorList>
            <person name="Chain P.S.G."/>
            <person name="Hu P."/>
            <person name="Malfatti S.A."/>
            <person name="Radnedge L."/>
            <person name="Larimer F."/>
            <person name="Vergez L.M."/>
            <person name="Worsham P."/>
            <person name="Chu M.C."/>
            <person name="Andersen G.L."/>
        </authorList>
    </citation>
    <scope>NUCLEOTIDE SEQUENCE [LARGE SCALE GENOMIC DNA]</scope>
    <source>
        <strain>Nepal516</strain>
    </source>
</reference>
<reference key="2">
    <citation type="submission" date="2009-04" db="EMBL/GenBank/DDBJ databases">
        <title>Yersinia pestis Nepal516A whole genome shotgun sequencing project.</title>
        <authorList>
            <person name="Plunkett G. III"/>
            <person name="Anderson B.D."/>
            <person name="Baumler D.J."/>
            <person name="Burland V."/>
            <person name="Cabot E.L."/>
            <person name="Glasner J.D."/>
            <person name="Mau B."/>
            <person name="Neeno-Eckwall E."/>
            <person name="Perna N.T."/>
            <person name="Munk A.C."/>
            <person name="Tapia R."/>
            <person name="Green L.D."/>
            <person name="Rogers Y.C."/>
            <person name="Detter J.C."/>
            <person name="Bruce D.C."/>
            <person name="Brettin T.S."/>
        </authorList>
    </citation>
    <scope>NUCLEOTIDE SEQUENCE [LARGE SCALE GENOMIC DNA]</scope>
    <source>
        <strain>Nepal516</strain>
    </source>
</reference>
<dbReference type="EMBL" id="CP000305">
    <property type="protein sequence ID" value="ABG17993.1"/>
    <property type="molecule type" value="Genomic_DNA"/>
</dbReference>
<dbReference type="EMBL" id="ACNQ01000009">
    <property type="protein sequence ID" value="EEO77116.1"/>
    <property type="molecule type" value="Genomic_DNA"/>
</dbReference>
<dbReference type="RefSeq" id="WP_002210640.1">
    <property type="nucleotide sequence ID" value="NZ_ACNQ01000009.1"/>
</dbReference>
<dbReference type="KEGG" id="ypn:YPN_1664"/>
<dbReference type="HOGENOM" id="CLU_089554_2_0_6"/>
<dbReference type="Proteomes" id="UP000008936">
    <property type="component" value="Chromosome"/>
</dbReference>
<dbReference type="GO" id="GO:0005886">
    <property type="term" value="C:plasma membrane"/>
    <property type="evidence" value="ECO:0007669"/>
    <property type="project" value="UniProtKB-SubCell"/>
</dbReference>
<dbReference type="HAMAP" id="MF_00189">
    <property type="entry name" value="YciB"/>
    <property type="match status" value="1"/>
</dbReference>
<dbReference type="InterPro" id="IPR006008">
    <property type="entry name" value="YciB"/>
</dbReference>
<dbReference type="NCBIfam" id="TIGR00997">
    <property type="entry name" value="ispZ"/>
    <property type="match status" value="1"/>
</dbReference>
<dbReference type="NCBIfam" id="NF001324">
    <property type="entry name" value="PRK00259.1-2"/>
    <property type="match status" value="1"/>
</dbReference>
<dbReference type="NCBIfam" id="NF001325">
    <property type="entry name" value="PRK00259.1-3"/>
    <property type="match status" value="1"/>
</dbReference>
<dbReference type="NCBIfam" id="NF001326">
    <property type="entry name" value="PRK00259.1-4"/>
    <property type="match status" value="1"/>
</dbReference>
<dbReference type="PANTHER" id="PTHR36917:SF1">
    <property type="entry name" value="INNER MEMBRANE-SPANNING PROTEIN YCIB"/>
    <property type="match status" value="1"/>
</dbReference>
<dbReference type="PANTHER" id="PTHR36917">
    <property type="entry name" value="INTRACELLULAR SEPTATION PROTEIN A-RELATED"/>
    <property type="match status" value="1"/>
</dbReference>
<dbReference type="Pfam" id="PF04279">
    <property type="entry name" value="IspA"/>
    <property type="match status" value="1"/>
</dbReference>
<organism>
    <name type="scientific">Yersinia pestis bv. Antiqua (strain Nepal516)</name>
    <dbReference type="NCBI Taxonomy" id="377628"/>
    <lineage>
        <taxon>Bacteria</taxon>
        <taxon>Pseudomonadati</taxon>
        <taxon>Pseudomonadota</taxon>
        <taxon>Gammaproteobacteria</taxon>
        <taxon>Enterobacterales</taxon>
        <taxon>Yersiniaceae</taxon>
        <taxon>Yersinia</taxon>
    </lineage>
</organism>
<proteinExistence type="inferred from homology"/>
<gene>
    <name evidence="1" type="primary">yciB</name>
    <name type="ordered locus">YPN_1664</name>
    <name type="ORF">YP516_1851</name>
</gene>
<sequence>MKQLLDFLPLVVFFIFYKMYDIFVASGALIVATLVALAFTWLKYRKVEKMTLVTAAMVLVFGTLTLAFHSDLFIKWKVTVLYVLFALALLVSQWVMKKPLIQRMLGKELTLPDKVWSTLNLSWAIFFLVCGLLNIYVAFWLPQDIWVNFKVFGLTALTLIFTLISGVYIYRHMPEEQKKS</sequence>
<name>YCIB_YERPN</name>
<keyword id="KW-0997">Cell inner membrane</keyword>
<keyword id="KW-1003">Cell membrane</keyword>
<keyword id="KW-0472">Membrane</keyword>
<keyword id="KW-0812">Transmembrane</keyword>
<keyword id="KW-1133">Transmembrane helix</keyword>